<protein>
    <recommendedName>
        <fullName evidence="1">tRNA1(Val) (adenine(37)-N6)-methyltransferase</fullName>
        <ecNumber evidence="1">2.1.1.223</ecNumber>
    </recommendedName>
    <alternativeName>
        <fullName evidence="1">tRNA m6A37 methyltransferase</fullName>
    </alternativeName>
</protein>
<sequence length="237" mass="26633">MANPYFQFKKFTVWHDKCAMKVGTDGVLLGAWASTERCQRILDVGTGTGLIALMLAQRSTAILDAIDIDSDACLQAQENIAKSPFANRIQVYQTSLSEYMPDENIKYDLIVSNPPYFIDSLKCPDTKRNLARHTDTLSLPDLLRDSRKLLAPEGNIALVLPFEQRESLIDIAREESLSPSREAHVSPIPDAPPKRLLIELSATPVAKPKSSHLTLEIERHRYSEEFTAIAKDFYLKM</sequence>
<gene>
    <name type="ordered locus">BDI_1875</name>
</gene>
<name>TRMN6_PARD8</name>
<dbReference type="EC" id="2.1.1.223" evidence="1"/>
<dbReference type="EMBL" id="CP000140">
    <property type="protein sequence ID" value="ABR43610.1"/>
    <property type="status" value="ALT_INIT"/>
    <property type="molecule type" value="Genomic_DNA"/>
</dbReference>
<dbReference type="RefSeq" id="WP_036612898.1">
    <property type="nucleotide sequence ID" value="NC_009615.1"/>
</dbReference>
<dbReference type="SMR" id="A6LD46"/>
<dbReference type="STRING" id="435591.BDI_1875"/>
<dbReference type="PaxDb" id="435591-BDI_1875"/>
<dbReference type="KEGG" id="pdi:BDI_1875"/>
<dbReference type="eggNOG" id="COG4123">
    <property type="taxonomic scope" value="Bacteria"/>
</dbReference>
<dbReference type="HOGENOM" id="CLU_061983_0_0_10"/>
<dbReference type="Proteomes" id="UP000000566">
    <property type="component" value="Chromosome"/>
</dbReference>
<dbReference type="GO" id="GO:0005737">
    <property type="term" value="C:cytoplasm"/>
    <property type="evidence" value="ECO:0007669"/>
    <property type="project" value="UniProtKB-SubCell"/>
</dbReference>
<dbReference type="GO" id="GO:0003676">
    <property type="term" value="F:nucleic acid binding"/>
    <property type="evidence" value="ECO:0007669"/>
    <property type="project" value="InterPro"/>
</dbReference>
<dbReference type="GO" id="GO:0016430">
    <property type="term" value="F:tRNA (adenine-N6)-methyltransferase activity"/>
    <property type="evidence" value="ECO:0007669"/>
    <property type="project" value="UniProtKB-UniRule"/>
</dbReference>
<dbReference type="GO" id="GO:0032259">
    <property type="term" value="P:methylation"/>
    <property type="evidence" value="ECO:0007669"/>
    <property type="project" value="UniProtKB-KW"/>
</dbReference>
<dbReference type="GO" id="GO:0008033">
    <property type="term" value="P:tRNA processing"/>
    <property type="evidence" value="ECO:0007669"/>
    <property type="project" value="UniProtKB-UniRule"/>
</dbReference>
<dbReference type="CDD" id="cd02440">
    <property type="entry name" value="AdoMet_MTases"/>
    <property type="match status" value="1"/>
</dbReference>
<dbReference type="Gene3D" id="3.40.50.150">
    <property type="entry name" value="Vaccinia Virus protein VP39"/>
    <property type="match status" value="1"/>
</dbReference>
<dbReference type="HAMAP" id="MF_01872">
    <property type="entry name" value="tRNA_methyltr_YfiC"/>
    <property type="match status" value="1"/>
</dbReference>
<dbReference type="InterPro" id="IPR002052">
    <property type="entry name" value="DNA_methylase_N6_adenine_CS"/>
</dbReference>
<dbReference type="InterPro" id="IPR029063">
    <property type="entry name" value="SAM-dependent_MTases_sf"/>
</dbReference>
<dbReference type="InterPro" id="IPR007848">
    <property type="entry name" value="Small_mtfrase_dom"/>
</dbReference>
<dbReference type="InterPro" id="IPR050210">
    <property type="entry name" value="tRNA_Adenine-N(6)_MTase"/>
</dbReference>
<dbReference type="InterPro" id="IPR022882">
    <property type="entry name" value="tRNA_adenine-N6_MeTrfase"/>
</dbReference>
<dbReference type="PANTHER" id="PTHR47739">
    <property type="entry name" value="TRNA1(VAL) (ADENINE(37)-N6)-METHYLTRANSFERASE"/>
    <property type="match status" value="1"/>
</dbReference>
<dbReference type="PANTHER" id="PTHR47739:SF1">
    <property type="entry name" value="TRNA1(VAL) (ADENINE(37)-N6)-METHYLTRANSFERASE"/>
    <property type="match status" value="1"/>
</dbReference>
<dbReference type="Pfam" id="PF05175">
    <property type="entry name" value="MTS"/>
    <property type="match status" value="1"/>
</dbReference>
<dbReference type="SUPFAM" id="SSF53335">
    <property type="entry name" value="S-adenosyl-L-methionine-dependent methyltransferases"/>
    <property type="match status" value="1"/>
</dbReference>
<dbReference type="PROSITE" id="PS00092">
    <property type="entry name" value="N6_MTASE"/>
    <property type="match status" value="1"/>
</dbReference>
<proteinExistence type="inferred from homology"/>
<accession>A6LD46</accession>
<comment type="function">
    <text evidence="1">Specifically methylates the adenine in position 37 of tRNA(1)(Val) (anticodon cmo5UAC).</text>
</comment>
<comment type="catalytic activity">
    <reaction evidence="1">
        <text>adenosine(37) in tRNA1(Val) + S-adenosyl-L-methionine = N(6)-methyladenosine(37) in tRNA1(Val) + S-adenosyl-L-homocysteine + H(+)</text>
        <dbReference type="Rhea" id="RHEA:43160"/>
        <dbReference type="Rhea" id="RHEA-COMP:10369"/>
        <dbReference type="Rhea" id="RHEA-COMP:10370"/>
        <dbReference type="ChEBI" id="CHEBI:15378"/>
        <dbReference type="ChEBI" id="CHEBI:57856"/>
        <dbReference type="ChEBI" id="CHEBI:59789"/>
        <dbReference type="ChEBI" id="CHEBI:74411"/>
        <dbReference type="ChEBI" id="CHEBI:74449"/>
        <dbReference type="EC" id="2.1.1.223"/>
    </reaction>
</comment>
<comment type="subcellular location">
    <subcellularLocation>
        <location evidence="1">Cytoplasm</location>
    </subcellularLocation>
</comment>
<comment type="similarity">
    <text evidence="1">Belongs to the methyltransferase superfamily. tRNA (adenine-N(6)-)-methyltransferase family.</text>
</comment>
<comment type="sequence caution" evidence="2">
    <conflict type="erroneous initiation">
        <sequence resource="EMBL-CDS" id="ABR43610"/>
    </conflict>
</comment>
<reference key="1">
    <citation type="journal article" date="2007" name="PLoS Biol.">
        <title>Evolution of symbiotic bacteria in the distal human intestine.</title>
        <authorList>
            <person name="Xu J."/>
            <person name="Mahowald M.A."/>
            <person name="Ley R.E."/>
            <person name="Lozupone C.A."/>
            <person name="Hamady M."/>
            <person name="Martens E.C."/>
            <person name="Henrissat B."/>
            <person name="Coutinho P.M."/>
            <person name="Minx P."/>
            <person name="Latreille P."/>
            <person name="Cordum H."/>
            <person name="Van Brunt A."/>
            <person name="Kim K."/>
            <person name="Fulton R.S."/>
            <person name="Fulton L.A."/>
            <person name="Clifton S.W."/>
            <person name="Wilson R.K."/>
            <person name="Knight R.D."/>
            <person name="Gordon J.I."/>
        </authorList>
    </citation>
    <scope>NUCLEOTIDE SEQUENCE [LARGE SCALE GENOMIC DNA]</scope>
    <source>
        <strain>ATCC 8503 / DSM 20701 / CIP 104284 / JCM 5825 / NCTC 11152</strain>
    </source>
</reference>
<feature type="chain" id="PRO_0000387392" description="tRNA1(Val) (adenine(37)-N6)-methyltransferase">
    <location>
        <begin position="1"/>
        <end position="237"/>
    </location>
</feature>
<organism>
    <name type="scientific">Parabacteroides distasonis (strain ATCC 8503 / DSM 20701 / CIP 104284 / JCM 5825 / NCTC 11152)</name>
    <dbReference type="NCBI Taxonomy" id="435591"/>
    <lineage>
        <taxon>Bacteria</taxon>
        <taxon>Pseudomonadati</taxon>
        <taxon>Bacteroidota</taxon>
        <taxon>Bacteroidia</taxon>
        <taxon>Bacteroidales</taxon>
        <taxon>Tannerellaceae</taxon>
        <taxon>Parabacteroides</taxon>
    </lineage>
</organism>
<evidence type="ECO:0000255" key="1">
    <source>
        <dbReference type="HAMAP-Rule" id="MF_01872"/>
    </source>
</evidence>
<evidence type="ECO:0000305" key="2"/>
<keyword id="KW-0963">Cytoplasm</keyword>
<keyword id="KW-0489">Methyltransferase</keyword>
<keyword id="KW-1185">Reference proteome</keyword>
<keyword id="KW-0949">S-adenosyl-L-methionine</keyword>
<keyword id="KW-0808">Transferase</keyword>
<keyword id="KW-0819">tRNA processing</keyword>